<feature type="chain" id="PRO_0000100651" description="Phosphoadenosine 5'-phosphosulfate reductase">
    <location>
        <begin position="1"/>
        <end position="239"/>
    </location>
</feature>
<feature type="active site" description="Nucleophile; cysteine thiosulfonate intermediate" evidence="1">
    <location>
        <position position="235"/>
    </location>
</feature>
<organism>
    <name type="scientific">Thiocapsa roseopersicina</name>
    <dbReference type="NCBI Taxonomy" id="1058"/>
    <lineage>
        <taxon>Bacteria</taxon>
        <taxon>Pseudomonadati</taxon>
        <taxon>Pseudomonadota</taxon>
        <taxon>Gammaproteobacteria</taxon>
        <taxon>Chromatiales</taxon>
        <taxon>Chromatiaceae</taxon>
        <taxon>Thiocapsa</taxon>
    </lineage>
</organism>
<gene>
    <name evidence="1" type="primary">cysH</name>
</gene>
<comment type="function">
    <text evidence="1">Catalyzes the formation of sulfite from phosphoadenosine 5'-phosphosulfate (PAPS) using thioredoxin as an electron donor.</text>
</comment>
<comment type="catalytic activity">
    <reaction evidence="1">
        <text>[thioredoxin]-disulfide + sulfite + adenosine 3',5'-bisphosphate + 2 H(+) = [thioredoxin]-dithiol + 3'-phosphoadenylyl sulfate</text>
        <dbReference type="Rhea" id="RHEA:11724"/>
        <dbReference type="Rhea" id="RHEA-COMP:10698"/>
        <dbReference type="Rhea" id="RHEA-COMP:10700"/>
        <dbReference type="ChEBI" id="CHEBI:15378"/>
        <dbReference type="ChEBI" id="CHEBI:17359"/>
        <dbReference type="ChEBI" id="CHEBI:29950"/>
        <dbReference type="ChEBI" id="CHEBI:50058"/>
        <dbReference type="ChEBI" id="CHEBI:58339"/>
        <dbReference type="ChEBI" id="CHEBI:58343"/>
        <dbReference type="EC" id="1.8.4.8"/>
    </reaction>
</comment>
<comment type="pathway">
    <text evidence="1">Sulfur metabolism; hydrogen sulfide biosynthesis; sulfite from sulfate: step 3/3.</text>
</comment>
<comment type="subcellular location">
    <subcellularLocation>
        <location evidence="1">Cytoplasm</location>
    </subcellularLocation>
</comment>
<comment type="similarity">
    <text evidence="1 2">Belongs to the PAPS reductase family. CysH subfamily.</text>
</comment>
<name>CYSH_THIRO</name>
<keyword id="KW-0963">Cytoplasm</keyword>
<keyword id="KW-0560">Oxidoreductase</keyword>
<protein>
    <recommendedName>
        <fullName evidence="1">Phosphoadenosine 5'-phosphosulfate reductase</fullName>
        <shortName evidence="1">PAPS reductase</shortName>
        <ecNumber evidence="1">1.8.4.8</ecNumber>
    </recommendedName>
    <alternativeName>
        <fullName evidence="1">3'-phosphoadenylylsulfate reductase</fullName>
    </alternativeName>
    <alternativeName>
        <fullName evidence="1">PAPS reductase, thioredoxin dependent</fullName>
    </alternativeName>
    <alternativeName>
        <fullName evidence="1">PAPS sulfotransferase</fullName>
    </alternativeName>
    <alternativeName>
        <fullName evidence="1">PAdoPS reductase</fullName>
    </alternativeName>
</protein>
<evidence type="ECO:0000255" key="1">
    <source>
        <dbReference type="HAMAP-Rule" id="MF_00063"/>
    </source>
</evidence>
<evidence type="ECO:0000305" key="2"/>
<accession>P52672</accession>
<proteinExistence type="inferred from homology"/>
<sequence>MSKPDLDAFLHGDDAALRETNRRLESMPAEDRVRWALEHLPPQHVLSSSFGTQSAVMLHLVSRQMPEIPVILVDTGYLFPETYRLVDALTDRFGLNLKVYRPALSPAWQEAGLGRLWEQGADGIERYNRLNKIDPMERALRDLDAGTWFAGLRRQQANSRAELPVLRRQDGRIKFHPIIDWHRPRRARYLRRHDLPDHPLRDQGYVSIGDVHTTVPLLPGMLEEETRFFGIKRECGLHR</sequence>
<dbReference type="EC" id="1.8.4.8" evidence="1"/>
<dbReference type="EMBL" id="Z23169">
    <property type="protein sequence ID" value="CAA80690.1"/>
    <property type="molecule type" value="Genomic_DNA"/>
</dbReference>
<dbReference type="PIR" id="S34193">
    <property type="entry name" value="S34193"/>
</dbReference>
<dbReference type="SMR" id="P52672"/>
<dbReference type="STRING" id="1058.SAMN05421783_107104"/>
<dbReference type="UniPathway" id="UPA00140">
    <property type="reaction ID" value="UER00206"/>
</dbReference>
<dbReference type="GO" id="GO:0005737">
    <property type="term" value="C:cytoplasm"/>
    <property type="evidence" value="ECO:0007669"/>
    <property type="project" value="UniProtKB-SubCell"/>
</dbReference>
<dbReference type="GO" id="GO:0004604">
    <property type="term" value="F:phosphoadenylyl-sulfate reductase (thioredoxin) activity"/>
    <property type="evidence" value="ECO:0007669"/>
    <property type="project" value="UniProtKB-UniRule"/>
</dbReference>
<dbReference type="GO" id="GO:0070814">
    <property type="term" value="P:hydrogen sulfide biosynthetic process"/>
    <property type="evidence" value="ECO:0007669"/>
    <property type="project" value="UniProtKB-UniRule"/>
</dbReference>
<dbReference type="GO" id="GO:0019379">
    <property type="term" value="P:sulfate assimilation, phosphoadenylyl sulfate reduction by phosphoadenylyl-sulfate reductase (thioredoxin)"/>
    <property type="evidence" value="ECO:0007669"/>
    <property type="project" value="UniProtKB-UniRule"/>
</dbReference>
<dbReference type="CDD" id="cd23945">
    <property type="entry name" value="PAPS_reductase"/>
    <property type="match status" value="1"/>
</dbReference>
<dbReference type="Gene3D" id="3.40.50.620">
    <property type="entry name" value="HUPs"/>
    <property type="match status" value="1"/>
</dbReference>
<dbReference type="HAMAP" id="MF_00063">
    <property type="entry name" value="CysH"/>
    <property type="match status" value="1"/>
</dbReference>
<dbReference type="InterPro" id="IPR004511">
    <property type="entry name" value="PAPS/APS_Rdtase"/>
</dbReference>
<dbReference type="InterPro" id="IPR002500">
    <property type="entry name" value="PAPS_reduct_dom"/>
</dbReference>
<dbReference type="InterPro" id="IPR011800">
    <property type="entry name" value="PAPS_reductase_CysH"/>
</dbReference>
<dbReference type="InterPro" id="IPR014729">
    <property type="entry name" value="Rossmann-like_a/b/a_fold"/>
</dbReference>
<dbReference type="NCBIfam" id="TIGR00434">
    <property type="entry name" value="cysH"/>
    <property type="match status" value="1"/>
</dbReference>
<dbReference type="NCBIfam" id="TIGR02057">
    <property type="entry name" value="PAPS_reductase"/>
    <property type="match status" value="1"/>
</dbReference>
<dbReference type="NCBIfam" id="NF002537">
    <property type="entry name" value="PRK02090.1"/>
    <property type="match status" value="1"/>
</dbReference>
<dbReference type="PANTHER" id="PTHR46509">
    <property type="entry name" value="PHOSPHOADENOSINE PHOSPHOSULFATE REDUCTASE"/>
    <property type="match status" value="1"/>
</dbReference>
<dbReference type="PANTHER" id="PTHR46509:SF1">
    <property type="entry name" value="PHOSPHOADENOSINE PHOSPHOSULFATE REDUCTASE"/>
    <property type="match status" value="1"/>
</dbReference>
<dbReference type="Pfam" id="PF01507">
    <property type="entry name" value="PAPS_reduct"/>
    <property type="match status" value="1"/>
</dbReference>
<dbReference type="PIRSF" id="PIRSF000857">
    <property type="entry name" value="PAPS_reductase"/>
    <property type="match status" value="1"/>
</dbReference>
<dbReference type="SUPFAM" id="SSF52402">
    <property type="entry name" value="Adenine nucleotide alpha hydrolases-like"/>
    <property type="match status" value="1"/>
</dbReference>
<reference key="1">
    <citation type="journal article" date="1996" name="Biochim. Biophys. Acta">
        <title>A cDNA clone from Arabidopsis thaliana encoding plastidic ferredoxin:sulfite reductase.</title>
        <authorList>
            <person name="Bruehl A."/>
            <person name="Haverkamp T."/>
            <person name="Gisselmann G."/>
            <person name="Schwenn J.D."/>
        </authorList>
    </citation>
    <scope>NUCLEOTIDE SEQUENCE [GENOMIC DNA]</scope>
    <source>
        <strain>DSM 219 / 6311</strain>
    </source>
</reference>